<keyword id="KW-0025">Alternative splicing</keyword>
<keyword id="KW-0238">DNA-binding</keyword>
<keyword id="KW-1017">Isopeptide bond</keyword>
<keyword id="KW-0479">Metal-binding</keyword>
<keyword id="KW-0539">Nucleus</keyword>
<keyword id="KW-0597">Phosphoprotein</keyword>
<keyword id="KW-1185">Reference proteome</keyword>
<keyword id="KW-0677">Repeat</keyword>
<keyword id="KW-0804">Transcription</keyword>
<keyword id="KW-0805">Transcription regulation</keyword>
<keyword id="KW-0832">Ubl conjugation</keyword>
<keyword id="KW-0862">Zinc</keyword>
<keyword id="KW-0863">Zinc-finger</keyword>
<name>ZKSC1_MOUSE</name>
<comment type="function">
    <text>May be involved in transcriptional regulation.</text>
</comment>
<comment type="subcellular location">
    <subcellularLocation>
        <location evidence="3">Nucleus</location>
    </subcellularLocation>
</comment>
<comment type="alternative products">
    <event type="alternative splicing"/>
    <isoform>
        <id>Q8BGS3-1</id>
        <name>1</name>
        <sequence type="displayed"/>
    </isoform>
    <isoform>
        <id>Q8BGS3-2</id>
        <name>2</name>
        <sequence type="described" ref="VSP_016958"/>
    </isoform>
</comment>
<comment type="similarity">
    <text evidence="7">Belongs to the krueppel C2H2-type zinc-finger protein family.</text>
</comment>
<comment type="sequence caution" evidence="7">
    <conflict type="frameshift">
        <sequence resource="EMBL-CDS" id="BAC27539"/>
    </conflict>
</comment>
<feature type="chain" id="PRO_0000047754" description="Zinc finger protein with KRAB and SCAN domains 1">
    <location>
        <begin position="1"/>
        <end position="561"/>
    </location>
</feature>
<feature type="domain" description="SCAN box" evidence="3">
    <location>
        <begin position="56"/>
        <end position="138"/>
    </location>
</feature>
<feature type="domain" description="KRAB">
    <location>
        <begin position="225"/>
        <end position="304"/>
    </location>
</feature>
<feature type="zinc finger region" description="C2H2-type 1" evidence="2">
    <location>
        <begin position="375"/>
        <end position="397"/>
    </location>
</feature>
<feature type="zinc finger region" description="C2H2-type 2" evidence="2">
    <location>
        <begin position="403"/>
        <end position="425"/>
    </location>
</feature>
<feature type="zinc finger region" description="C2H2-type 3" evidence="2">
    <location>
        <begin position="431"/>
        <end position="453"/>
    </location>
</feature>
<feature type="zinc finger region" description="C2H2-type 4" evidence="2">
    <location>
        <begin position="459"/>
        <end position="481"/>
    </location>
</feature>
<feature type="zinc finger region" description="C2H2-type 5" evidence="2">
    <location>
        <begin position="487"/>
        <end position="509"/>
    </location>
</feature>
<feature type="zinc finger region" description="C2H2-type 6" evidence="2">
    <location>
        <begin position="515"/>
        <end position="537"/>
    </location>
</feature>
<feature type="region of interest" description="Disordered" evidence="4">
    <location>
        <begin position="1"/>
        <end position="51"/>
    </location>
</feature>
<feature type="region of interest" description="Disordered" evidence="4">
    <location>
        <begin position="163"/>
        <end position="187"/>
    </location>
</feature>
<feature type="region of interest" description="Disordered" evidence="4">
    <location>
        <begin position="260"/>
        <end position="372"/>
    </location>
</feature>
<feature type="compositionally biased region" description="Basic residues" evidence="4">
    <location>
        <begin position="178"/>
        <end position="187"/>
    </location>
</feature>
<feature type="compositionally biased region" description="Polar residues" evidence="4">
    <location>
        <begin position="260"/>
        <end position="275"/>
    </location>
</feature>
<feature type="compositionally biased region" description="Basic and acidic residues" evidence="4">
    <location>
        <begin position="276"/>
        <end position="286"/>
    </location>
</feature>
<feature type="compositionally biased region" description="Basic and acidic residues" evidence="4">
    <location>
        <begin position="294"/>
        <end position="349"/>
    </location>
</feature>
<feature type="compositionally biased region" description="Polar residues" evidence="4">
    <location>
        <begin position="355"/>
        <end position="365"/>
    </location>
</feature>
<feature type="modified residue" description="Phosphoserine" evidence="1">
    <location>
        <position position="13"/>
    </location>
</feature>
<feature type="cross-link" description="Glycyl lysine isopeptide (Lys-Gly) (interchain with G-Cter in SUMO2)" evidence="1">
    <location>
        <position position="27"/>
    </location>
</feature>
<feature type="cross-link" description="Glycyl lysine isopeptide (Lys-Gly) (interchain with G-Cter in SUMO2)" evidence="1">
    <location>
        <position position="180"/>
    </location>
</feature>
<feature type="cross-link" description="Glycyl lysine isopeptide (Lys-Gly) (interchain with G-Cter in SUMO2)" evidence="1">
    <location>
        <position position="226"/>
    </location>
</feature>
<feature type="cross-link" description="Glycyl lysine isopeptide (Lys-Gly) (interchain with G-Cter in SUMO2)" evidence="1">
    <location>
        <position position="277"/>
    </location>
</feature>
<feature type="cross-link" description="Glycyl lysine isopeptide (Lys-Gly) (interchain with G-Cter in SUMO2)" evidence="1">
    <location>
        <position position="296"/>
    </location>
</feature>
<feature type="cross-link" description="Glycyl lysine isopeptide (Lys-Gly) (interchain with G-Cter in SUMO2)" evidence="1">
    <location>
        <position position="301"/>
    </location>
</feature>
<feature type="cross-link" description="Glycyl lysine isopeptide (Lys-Gly) (interchain with G-Cter in SUMO2)" evidence="1">
    <location>
        <position position="336"/>
    </location>
</feature>
<feature type="cross-link" description="Glycyl lysine isopeptide (Lys-Gly) (interchain with G-Cter in SUMO2)" evidence="1">
    <location>
        <position position="373"/>
    </location>
</feature>
<feature type="cross-link" description="Glycyl lysine isopeptide (Lys-Gly) (interchain with G-Cter in SUMO2)" evidence="1">
    <location>
        <position position="410"/>
    </location>
</feature>
<feature type="cross-link" description="Glycyl lysine isopeptide (Lys-Gly) (interchain with G-Cter in SUMO2)" evidence="1">
    <location>
        <position position="438"/>
    </location>
</feature>
<feature type="cross-link" description="Glycyl lysine isopeptide (Lys-Gly) (interchain with G-Cter in SUMO2)" evidence="1">
    <location>
        <position position="476"/>
    </location>
</feature>
<feature type="cross-link" description="Glycyl lysine isopeptide (Lys-Gly) (interchain with G-Cter in SUMO2)" evidence="1">
    <location>
        <position position="558"/>
    </location>
</feature>
<feature type="splice variant" id="VSP_016958" description="In isoform 2." evidence="5 6">
    <location>
        <begin position="192"/>
        <end position="264"/>
    </location>
</feature>
<feature type="sequence conflict" description="In Ref. 2; BAC27539." evidence="7" ref="2">
    <original>L</original>
    <variation>M</variation>
    <location>
        <position position="244"/>
    </location>
</feature>
<proteinExistence type="evidence at transcript level"/>
<dbReference type="EMBL" id="AK131148">
    <property type="protein sequence ID" value="BAD21398.1"/>
    <property type="molecule type" value="mRNA"/>
</dbReference>
<dbReference type="EMBL" id="AK020039">
    <property type="protein sequence ID" value="BAB31975.1"/>
    <property type="molecule type" value="mRNA"/>
</dbReference>
<dbReference type="EMBL" id="AK028932">
    <property type="protein sequence ID" value="BAC26200.1"/>
    <property type="molecule type" value="mRNA"/>
</dbReference>
<dbReference type="EMBL" id="AK031759">
    <property type="protein sequence ID" value="BAC27539.1"/>
    <property type="status" value="ALT_FRAME"/>
    <property type="molecule type" value="mRNA"/>
</dbReference>
<dbReference type="EMBL" id="AK036807">
    <property type="protein sequence ID" value="BAC29584.1"/>
    <property type="molecule type" value="mRNA"/>
</dbReference>
<dbReference type="EMBL" id="AK054323">
    <property type="protein sequence ID" value="BAC35730.1"/>
    <property type="molecule type" value="mRNA"/>
</dbReference>
<dbReference type="EMBL" id="AK135999">
    <property type="protein sequence ID" value="BAE22767.1"/>
    <property type="molecule type" value="mRNA"/>
</dbReference>
<dbReference type="EMBL" id="BC052441">
    <property type="protein sequence ID" value="AAH52441.1"/>
    <property type="molecule type" value="mRNA"/>
</dbReference>
<dbReference type="CCDS" id="CCDS19788.1">
    <molecule id="Q8BGS3-2"/>
</dbReference>
<dbReference type="CCDS" id="CCDS19789.1">
    <molecule id="Q8BGS3-1"/>
</dbReference>
<dbReference type="RefSeq" id="NP_084145.1">
    <molecule id="Q8BGS3-2"/>
    <property type="nucleotide sequence ID" value="NM_029869.1"/>
</dbReference>
<dbReference type="RefSeq" id="NP_598667.2">
    <molecule id="Q8BGS3-1"/>
    <property type="nucleotide sequence ID" value="NM_133906.4"/>
</dbReference>
<dbReference type="RefSeq" id="XP_006504691.1">
    <molecule id="Q8BGS3-2"/>
    <property type="nucleotide sequence ID" value="XM_006504628.4"/>
</dbReference>
<dbReference type="SMR" id="Q8BGS3"/>
<dbReference type="BioGRID" id="216852">
    <property type="interactions" value="2"/>
</dbReference>
<dbReference type="FunCoup" id="Q8BGS3">
    <property type="interactions" value="615"/>
</dbReference>
<dbReference type="IntAct" id="Q8BGS3">
    <property type="interactions" value="1"/>
</dbReference>
<dbReference type="STRING" id="10090.ENSMUSP00000019660"/>
<dbReference type="iPTMnet" id="Q8BGS3"/>
<dbReference type="PhosphoSitePlus" id="Q8BGS3"/>
<dbReference type="PaxDb" id="10090-ENSMUSP00000019660"/>
<dbReference type="PeptideAtlas" id="Q8BGS3"/>
<dbReference type="ProteomicsDB" id="275372">
    <molecule id="Q8BGS3-1"/>
</dbReference>
<dbReference type="ProteomicsDB" id="275373">
    <molecule id="Q8BGS3-2"/>
</dbReference>
<dbReference type="Pumba" id="Q8BGS3"/>
<dbReference type="Antibodypedia" id="1764">
    <property type="antibodies" value="181 antibodies from 23 providers"/>
</dbReference>
<dbReference type="Ensembl" id="ENSMUST00000019660.11">
    <molecule id="Q8BGS3-1"/>
    <property type="protein sequence ID" value="ENSMUSP00000019660.5"/>
    <property type="gene ID" value="ENSMUSG00000029729.13"/>
</dbReference>
<dbReference type="Ensembl" id="ENSMUST00000066617.12">
    <molecule id="Q8BGS3-2"/>
    <property type="protein sequence ID" value="ENSMUSP00000068480.6"/>
    <property type="gene ID" value="ENSMUSG00000029729.13"/>
</dbReference>
<dbReference type="Ensembl" id="ENSMUST00000110962.2">
    <molecule id="Q8BGS3-2"/>
    <property type="protein sequence ID" value="ENSMUSP00000106587.2"/>
    <property type="gene ID" value="ENSMUSG00000029729.13"/>
</dbReference>
<dbReference type="Ensembl" id="ENSMUST00000110963.8">
    <molecule id="Q8BGS3-2"/>
    <property type="protein sequence ID" value="ENSMUSP00000106588.2"/>
    <property type="gene ID" value="ENSMUSG00000029729.13"/>
</dbReference>
<dbReference type="GeneID" id="74570"/>
<dbReference type="KEGG" id="mmu:74570"/>
<dbReference type="UCSC" id="uc009aej.1">
    <molecule id="Q8BGS3-1"/>
    <property type="organism name" value="mouse"/>
</dbReference>
<dbReference type="UCSC" id="uc009aek.1">
    <molecule id="Q8BGS3-2"/>
    <property type="organism name" value="mouse"/>
</dbReference>
<dbReference type="AGR" id="MGI:1921820"/>
<dbReference type="CTD" id="7586"/>
<dbReference type="MGI" id="MGI:1921820">
    <property type="gene designation" value="Zkscan1"/>
</dbReference>
<dbReference type="VEuPathDB" id="HostDB:ENSMUSG00000029729"/>
<dbReference type="eggNOG" id="KOG1721">
    <property type="taxonomic scope" value="Eukaryota"/>
</dbReference>
<dbReference type="GeneTree" id="ENSGT00940000161592"/>
<dbReference type="HOGENOM" id="CLU_002678_49_8_1"/>
<dbReference type="InParanoid" id="Q8BGS3"/>
<dbReference type="OMA" id="IHNRERA"/>
<dbReference type="OrthoDB" id="6354171at2759"/>
<dbReference type="PhylomeDB" id="Q8BGS3"/>
<dbReference type="TreeFam" id="TF350830"/>
<dbReference type="Reactome" id="R-MMU-212436">
    <property type="pathway name" value="Generic Transcription Pathway"/>
</dbReference>
<dbReference type="BioGRID-ORCS" id="74570">
    <property type="hits" value="4 hits in 78 CRISPR screens"/>
</dbReference>
<dbReference type="ChiTaRS" id="Zkscan1">
    <property type="organism name" value="mouse"/>
</dbReference>
<dbReference type="PRO" id="PR:Q8BGS3"/>
<dbReference type="Proteomes" id="UP000000589">
    <property type="component" value="Chromosome 5"/>
</dbReference>
<dbReference type="RNAct" id="Q8BGS3">
    <property type="molecule type" value="protein"/>
</dbReference>
<dbReference type="Bgee" id="ENSMUSG00000029729">
    <property type="expression patterns" value="Expressed in metanephric cortical collecting duct and 231 other cell types or tissues"/>
</dbReference>
<dbReference type="GO" id="GO:0005634">
    <property type="term" value="C:nucleus"/>
    <property type="evidence" value="ECO:0007669"/>
    <property type="project" value="UniProtKB-SubCell"/>
</dbReference>
<dbReference type="GO" id="GO:0003677">
    <property type="term" value="F:DNA binding"/>
    <property type="evidence" value="ECO:0007669"/>
    <property type="project" value="UniProtKB-KW"/>
</dbReference>
<dbReference type="GO" id="GO:0008270">
    <property type="term" value="F:zinc ion binding"/>
    <property type="evidence" value="ECO:0007669"/>
    <property type="project" value="UniProtKB-KW"/>
</dbReference>
<dbReference type="GO" id="GO:0006355">
    <property type="term" value="P:regulation of DNA-templated transcription"/>
    <property type="evidence" value="ECO:0007669"/>
    <property type="project" value="InterPro"/>
</dbReference>
<dbReference type="CDD" id="cd07765">
    <property type="entry name" value="KRAB_A-box"/>
    <property type="match status" value="1"/>
</dbReference>
<dbReference type="CDD" id="cd07936">
    <property type="entry name" value="SCAN"/>
    <property type="match status" value="1"/>
</dbReference>
<dbReference type="FunFam" id="3.30.160.60:FF:004137">
    <property type="match status" value="2"/>
</dbReference>
<dbReference type="FunFam" id="3.30.160.60:FF:004935">
    <property type="match status" value="1"/>
</dbReference>
<dbReference type="FunFam" id="1.10.4020.10:FF:000001">
    <property type="entry name" value="zinc finger protein 263 isoform X1"/>
    <property type="match status" value="1"/>
</dbReference>
<dbReference type="FunFam" id="3.30.160.60:FF:002278">
    <property type="entry name" value="Zinc finger protein 320"/>
    <property type="match status" value="2"/>
</dbReference>
<dbReference type="FunFam" id="3.30.160.60:FF:002402">
    <property type="entry name" value="Zinc finger protein 347"/>
    <property type="match status" value="1"/>
</dbReference>
<dbReference type="FunFam" id="3.30.160.60:FF:000307">
    <property type="entry name" value="Zinc finger protein ZFP69 isoform 1"/>
    <property type="match status" value="1"/>
</dbReference>
<dbReference type="FunFam" id="3.30.160.60:FF:000330">
    <property type="entry name" value="Zinc finger with KRAB and SCAN domains 1"/>
    <property type="match status" value="1"/>
</dbReference>
<dbReference type="FunFam" id="3.30.160.60:FF:000496">
    <property type="entry name" value="Zinc finger with KRAB and SCAN domains 1"/>
    <property type="match status" value="1"/>
</dbReference>
<dbReference type="Gene3D" id="6.10.140.140">
    <property type="match status" value="1"/>
</dbReference>
<dbReference type="Gene3D" id="3.30.160.60">
    <property type="entry name" value="Classic Zinc Finger"/>
    <property type="match status" value="6"/>
</dbReference>
<dbReference type="Gene3D" id="1.10.4020.10">
    <property type="entry name" value="DNA breaking-rejoining enzymes"/>
    <property type="match status" value="1"/>
</dbReference>
<dbReference type="InterPro" id="IPR001909">
    <property type="entry name" value="KRAB"/>
</dbReference>
<dbReference type="InterPro" id="IPR036051">
    <property type="entry name" value="KRAB_dom_sf"/>
</dbReference>
<dbReference type="InterPro" id="IPR003309">
    <property type="entry name" value="SCAN_dom"/>
</dbReference>
<dbReference type="InterPro" id="IPR038269">
    <property type="entry name" value="SCAN_sf"/>
</dbReference>
<dbReference type="InterPro" id="IPR036236">
    <property type="entry name" value="Znf_C2H2_sf"/>
</dbReference>
<dbReference type="InterPro" id="IPR013087">
    <property type="entry name" value="Znf_C2H2_type"/>
</dbReference>
<dbReference type="PANTHER" id="PTHR23226">
    <property type="entry name" value="ZINC FINGER AND SCAN DOMAIN-CONTAINING"/>
    <property type="match status" value="1"/>
</dbReference>
<dbReference type="PANTHER" id="PTHR23226:SF366">
    <property type="entry name" value="ZINC FINGER PROTEIN ZFP2"/>
    <property type="match status" value="1"/>
</dbReference>
<dbReference type="Pfam" id="PF01352">
    <property type="entry name" value="KRAB"/>
    <property type="match status" value="1"/>
</dbReference>
<dbReference type="Pfam" id="PF02023">
    <property type="entry name" value="SCAN"/>
    <property type="match status" value="1"/>
</dbReference>
<dbReference type="Pfam" id="PF00096">
    <property type="entry name" value="zf-C2H2"/>
    <property type="match status" value="6"/>
</dbReference>
<dbReference type="SMART" id="SM00349">
    <property type="entry name" value="KRAB"/>
    <property type="match status" value="1"/>
</dbReference>
<dbReference type="SMART" id="SM00431">
    <property type="entry name" value="SCAN"/>
    <property type="match status" value="1"/>
</dbReference>
<dbReference type="SMART" id="SM00355">
    <property type="entry name" value="ZnF_C2H2"/>
    <property type="match status" value="6"/>
</dbReference>
<dbReference type="SUPFAM" id="SSF57667">
    <property type="entry name" value="beta-beta-alpha zinc fingers"/>
    <property type="match status" value="3"/>
</dbReference>
<dbReference type="SUPFAM" id="SSF109640">
    <property type="entry name" value="KRAB domain (Kruppel-associated box)"/>
    <property type="match status" value="1"/>
</dbReference>
<dbReference type="SUPFAM" id="SSF47353">
    <property type="entry name" value="Retrovirus capsid dimerization domain-like"/>
    <property type="match status" value="1"/>
</dbReference>
<dbReference type="PROSITE" id="PS50804">
    <property type="entry name" value="SCAN_BOX"/>
    <property type="match status" value="1"/>
</dbReference>
<dbReference type="PROSITE" id="PS00028">
    <property type="entry name" value="ZINC_FINGER_C2H2_1"/>
    <property type="match status" value="6"/>
</dbReference>
<dbReference type="PROSITE" id="PS50157">
    <property type="entry name" value="ZINC_FINGER_C2H2_2"/>
    <property type="match status" value="6"/>
</dbReference>
<accession>Q8BGS3</accession>
<accession>Q7TS88</accession>
<accession>Q8BJ55</accession>
<accession>Q9CRN6</accession>
<evidence type="ECO:0000250" key="1">
    <source>
        <dbReference type="UniProtKB" id="P17029"/>
    </source>
</evidence>
<evidence type="ECO:0000255" key="2">
    <source>
        <dbReference type="PROSITE-ProRule" id="PRU00042"/>
    </source>
</evidence>
<evidence type="ECO:0000255" key="3">
    <source>
        <dbReference type="PROSITE-ProRule" id="PRU00187"/>
    </source>
</evidence>
<evidence type="ECO:0000256" key="4">
    <source>
        <dbReference type="SAM" id="MobiDB-lite"/>
    </source>
</evidence>
<evidence type="ECO:0000303" key="5">
    <source>
    </source>
</evidence>
<evidence type="ECO:0000303" key="6">
    <source>
    </source>
</evidence>
<evidence type="ECO:0000305" key="7"/>
<sequence>MMTAESRETTGLSPQAAQEKDGIVIVKVEEEDEEDHMWGQDSSLQETPPPDPEVFRQRFRRFCYQNTFGPREALNRLKELCHQWLRPEVNSKEQILELLVLEQFLSILPKELQVWLQEYRPDSGEEAVTLLEDLELDLSGQQVPGQVHGPEMLARGVVPLDPVQESSSFDHHETAQSHFKHSSRKPRLLSRALPATHVPAPHHEGNPRDQAMASALLTADSQAMVKIEDMAVSLILEEWGCQNLARRNLNRDSRQMNLGNVFSQGSENRNGNESTSKAEVKEDSTSHGEIAGRFQKEFGEKREQQGRVVERQQKNPEEKTGKEKKEPGPPTAKEKKPSTGERGPREKGKGLGRSFSLSANFNNTPEEAPSGAKTHRCDECGKCFTRSSSLIRHKIIHTGEKPYECNECGKAFSLNSNLVLHQRIHTGEKPHECNECGKAFSHSSNLILHQRIHSGEKPYECNECGKAFSQSSDLTKHQRIHTGEKPYECSECGKAFNRNSYLILHRRIHTREKPYKCTKCGKAFTRSSTLTLHHRIHARERTSEYSPASLDAFGAFLKSCV</sequence>
<gene>
    <name type="primary">Zkscan1</name>
</gene>
<protein>
    <recommendedName>
        <fullName>Zinc finger protein with KRAB and SCAN domains 1</fullName>
    </recommendedName>
</protein>
<organism>
    <name type="scientific">Mus musculus</name>
    <name type="common">Mouse</name>
    <dbReference type="NCBI Taxonomy" id="10090"/>
    <lineage>
        <taxon>Eukaryota</taxon>
        <taxon>Metazoa</taxon>
        <taxon>Chordata</taxon>
        <taxon>Craniata</taxon>
        <taxon>Vertebrata</taxon>
        <taxon>Euteleostomi</taxon>
        <taxon>Mammalia</taxon>
        <taxon>Eutheria</taxon>
        <taxon>Euarchontoglires</taxon>
        <taxon>Glires</taxon>
        <taxon>Rodentia</taxon>
        <taxon>Myomorpha</taxon>
        <taxon>Muroidea</taxon>
        <taxon>Muridae</taxon>
        <taxon>Murinae</taxon>
        <taxon>Mus</taxon>
        <taxon>Mus</taxon>
    </lineage>
</organism>
<reference key="1">
    <citation type="journal article" date="2004" name="DNA Res.">
        <title>Prediction of the coding sequences of mouse homologues of FLJ genes: the complete nucleotide sequences of 110 mouse FLJ-homologous cDNAs identified by screening of terminal sequences of cDNA clones randomly sampled from size-fractionated libraries.</title>
        <authorList>
            <person name="Okazaki N."/>
            <person name="Kikuno R."/>
            <person name="Ohara R."/>
            <person name="Inamoto S."/>
            <person name="Koseki H."/>
            <person name="Hiraoka S."/>
            <person name="Saga Y."/>
            <person name="Kitamura H."/>
            <person name="Nakagawa T."/>
            <person name="Nagase T."/>
            <person name="Ohara O."/>
            <person name="Koga H."/>
        </authorList>
    </citation>
    <scope>NUCLEOTIDE SEQUENCE [LARGE SCALE MRNA] (ISOFORM 2)</scope>
    <source>
        <strain>BALB/cJ</strain>
        <tissue>Brain</tissue>
    </source>
</reference>
<reference key="2">
    <citation type="journal article" date="2005" name="Science">
        <title>The transcriptional landscape of the mammalian genome.</title>
        <authorList>
            <person name="Carninci P."/>
            <person name="Kasukawa T."/>
            <person name="Katayama S."/>
            <person name="Gough J."/>
            <person name="Frith M.C."/>
            <person name="Maeda N."/>
            <person name="Oyama R."/>
            <person name="Ravasi T."/>
            <person name="Lenhard B."/>
            <person name="Wells C."/>
            <person name="Kodzius R."/>
            <person name="Shimokawa K."/>
            <person name="Bajic V.B."/>
            <person name="Brenner S.E."/>
            <person name="Batalov S."/>
            <person name="Forrest A.R."/>
            <person name="Zavolan M."/>
            <person name="Davis M.J."/>
            <person name="Wilming L.G."/>
            <person name="Aidinis V."/>
            <person name="Allen J.E."/>
            <person name="Ambesi-Impiombato A."/>
            <person name="Apweiler R."/>
            <person name="Aturaliya R.N."/>
            <person name="Bailey T.L."/>
            <person name="Bansal M."/>
            <person name="Baxter L."/>
            <person name="Beisel K.W."/>
            <person name="Bersano T."/>
            <person name="Bono H."/>
            <person name="Chalk A.M."/>
            <person name="Chiu K.P."/>
            <person name="Choudhary V."/>
            <person name="Christoffels A."/>
            <person name="Clutterbuck D.R."/>
            <person name="Crowe M.L."/>
            <person name="Dalla E."/>
            <person name="Dalrymple B.P."/>
            <person name="de Bono B."/>
            <person name="Della Gatta G."/>
            <person name="di Bernardo D."/>
            <person name="Down T."/>
            <person name="Engstrom P."/>
            <person name="Fagiolini M."/>
            <person name="Faulkner G."/>
            <person name="Fletcher C.F."/>
            <person name="Fukushima T."/>
            <person name="Furuno M."/>
            <person name="Futaki S."/>
            <person name="Gariboldi M."/>
            <person name="Georgii-Hemming P."/>
            <person name="Gingeras T.R."/>
            <person name="Gojobori T."/>
            <person name="Green R.E."/>
            <person name="Gustincich S."/>
            <person name="Harbers M."/>
            <person name="Hayashi Y."/>
            <person name="Hensch T.K."/>
            <person name="Hirokawa N."/>
            <person name="Hill D."/>
            <person name="Huminiecki L."/>
            <person name="Iacono M."/>
            <person name="Ikeo K."/>
            <person name="Iwama A."/>
            <person name="Ishikawa T."/>
            <person name="Jakt M."/>
            <person name="Kanapin A."/>
            <person name="Katoh M."/>
            <person name="Kawasawa Y."/>
            <person name="Kelso J."/>
            <person name="Kitamura H."/>
            <person name="Kitano H."/>
            <person name="Kollias G."/>
            <person name="Krishnan S.P."/>
            <person name="Kruger A."/>
            <person name="Kummerfeld S.K."/>
            <person name="Kurochkin I.V."/>
            <person name="Lareau L.F."/>
            <person name="Lazarevic D."/>
            <person name="Lipovich L."/>
            <person name="Liu J."/>
            <person name="Liuni S."/>
            <person name="McWilliam S."/>
            <person name="Madan Babu M."/>
            <person name="Madera M."/>
            <person name="Marchionni L."/>
            <person name="Matsuda H."/>
            <person name="Matsuzawa S."/>
            <person name="Miki H."/>
            <person name="Mignone F."/>
            <person name="Miyake S."/>
            <person name="Morris K."/>
            <person name="Mottagui-Tabar S."/>
            <person name="Mulder N."/>
            <person name="Nakano N."/>
            <person name="Nakauchi H."/>
            <person name="Ng P."/>
            <person name="Nilsson R."/>
            <person name="Nishiguchi S."/>
            <person name="Nishikawa S."/>
            <person name="Nori F."/>
            <person name="Ohara O."/>
            <person name="Okazaki Y."/>
            <person name="Orlando V."/>
            <person name="Pang K.C."/>
            <person name="Pavan W.J."/>
            <person name="Pavesi G."/>
            <person name="Pesole G."/>
            <person name="Petrovsky N."/>
            <person name="Piazza S."/>
            <person name="Reed J."/>
            <person name="Reid J.F."/>
            <person name="Ring B.Z."/>
            <person name="Ringwald M."/>
            <person name="Rost B."/>
            <person name="Ruan Y."/>
            <person name="Salzberg S.L."/>
            <person name="Sandelin A."/>
            <person name="Schneider C."/>
            <person name="Schoenbach C."/>
            <person name="Sekiguchi K."/>
            <person name="Semple C.A."/>
            <person name="Seno S."/>
            <person name="Sessa L."/>
            <person name="Sheng Y."/>
            <person name="Shibata Y."/>
            <person name="Shimada H."/>
            <person name="Shimada K."/>
            <person name="Silva D."/>
            <person name="Sinclair B."/>
            <person name="Sperling S."/>
            <person name="Stupka E."/>
            <person name="Sugiura K."/>
            <person name="Sultana R."/>
            <person name="Takenaka Y."/>
            <person name="Taki K."/>
            <person name="Tammoja K."/>
            <person name="Tan S.L."/>
            <person name="Tang S."/>
            <person name="Taylor M.S."/>
            <person name="Tegner J."/>
            <person name="Teichmann S.A."/>
            <person name="Ueda H.R."/>
            <person name="van Nimwegen E."/>
            <person name="Verardo R."/>
            <person name="Wei C.L."/>
            <person name="Yagi K."/>
            <person name="Yamanishi H."/>
            <person name="Zabarovsky E."/>
            <person name="Zhu S."/>
            <person name="Zimmer A."/>
            <person name="Hide W."/>
            <person name="Bult C."/>
            <person name="Grimmond S.M."/>
            <person name="Teasdale R.D."/>
            <person name="Liu E.T."/>
            <person name="Brusic V."/>
            <person name="Quackenbush J."/>
            <person name="Wahlestedt C."/>
            <person name="Mattick J.S."/>
            <person name="Hume D.A."/>
            <person name="Kai C."/>
            <person name="Sasaki D."/>
            <person name="Tomaru Y."/>
            <person name="Fukuda S."/>
            <person name="Kanamori-Katayama M."/>
            <person name="Suzuki M."/>
            <person name="Aoki J."/>
            <person name="Arakawa T."/>
            <person name="Iida J."/>
            <person name="Imamura K."/>
            <person name="Itoh M."/>
            <person name="Kato T."/>
            <person name="Kawaji H."/>
            <person name="Kawagashira N."/>
            <person name="Kawashima T."/>
            <person name="Kojima M."/>
            <person name="Kondo S."/>
            <person name="Konno H."/>
            <person name="Nakano K."/>
            <person name="Ninomiya N."/>
            <person name="Nishio T."/>
            <person name="Okada M."/>
            <person name="Plessy C."/>
            <person name="Shibata K."/>
            <person name="Shiraki T."/>
            <person name="Suzuki S."/>
            <person name="Tagami M."/>
            <person name="Waki K."/>
            <person name="Watahiki A."/>
            <person name="Okamura-Oho Y."/>
            <person name="Suzuki H."/>
            <person name="Kawai J."/>
            <person name="Hayashizaki Y."/>
        </authorList>
    </citation>
    <scope>NUCLEOTIDE SEQUENCE [LARGE SCALE MRNA] (ISOFORM 1)</scope>
    <source>
        <strain>C57BL/6J</strain>
        <tissue>Egg</tissue>
        <tissue>Ovary</tissue>
        <tissue>Skin</tissue>
        <tissue>Vagina</tissue>
    </source>
</reference>
<reference key="3">
    <citation type="journal article" date="2004" name="Genome Res.">
        <title>The status, quality, and expansion of the NIH full-length cDNA project: the Mammalian Gene Collection (MGC).</title>
        <authorList>
            <consortium name="The MGC Project Team"/>
        </authorList>
    </citation>
    <scope>NUCLEOTIDE SEQUENCE [LARGE SCALE MRNA] (ISOFORM 2)</scope>
    <source>
        <strain>C57BL/6J</strain>
        <tissue>Brain</tissue>
    </source>
</reference>